<feature type="chain" id="PRO_1000000448" description="Argininosuccinate lyase">
    <location>
        <begin position="1"/>
        <end position="461"/>
    </location>
</feature>
<comment type="catalytic activity">
    <reaction evidence="1">
        <text>2-(N(omega)-L-arginino)succinate = fumarate + L-arginine</text>
        <dbReference type="Rhea" id="RHEA:24020"/>
        <dbReference type="ChEBI" id="CHEBI:29806"/>
        <dbReference type="ChEBI" id="CHEBI:32682"/>
        <dbReference type="ChEBI" id="CHEBI:57472"/>
        <dbReference type="EC" id="4.3.2.1"/>
    </reaction>
</comment>
<comment type="pathway">
    <text evidence="1">Amino-acid biosynthesis; L-arginine biosynthesis; L-arginine from L-ornithine and carbamoyl phosphate: step 3/3.</text>
</comment>
<comment type="subcellular location">
    <subcellularLocation>
        <location evidence="1">Cytoplasm</location>
    </subcellularLocation>
</comment>
<comment type="similarity">
    <text evidence="1">Belongs to the lyase 1 family. Argininosuccinate lyase subfamily.</text>
</comment>
<evidence type="ECO:0000255" key="1">
    <source>
        <dbReference type="HAMAP-Rule" id="MF_00006"/>
    </source>
</evidence>
<name>ARLY_AERHH</name>
<gene>
    <name evidence="1" type="primary">argH</name>
    <name type="ordered locus">AHA_0597</name>
</gene>
<dbReference type="EC" id="4.3.2.1" evidence="1"/>
<dbReference type="EMBL" id="CP000462">
    <property type="protein sequence ID" value="ABK36163.1"/>
    <property type="molecule type" value="Genomic_DNA"/>
</dbReference>
<dbReference type="RefSeq" id="WP_011704564.1">
    <property type="nucleotide sequence ID" value="NC_008570.1"/>
</dbReference>
<dbReference type="RefSeq" id="YP_855130.1">
    <property type="nucleotide sequence ID" value="NC_008570.1"/>
</dbReference>
<dbReference type="SMR" id="A0KFV4"/>
<dbReference type="STRING" id="380703.AHA_0597"/>
<dbReference type="EnsemblBacteria" id="ABK36163">
    <property type="protein sequence ID" value="ABK36163"/>
    <property type="gene ID" value="AHA_0597"/>
</dbReference>
<dbReference type="GeneID" id="4489264"/>
<dbReference type="KEGG" id="aha:AHA_0597"/>
<dbReference type="PATRIC" id="fig|380703.7.peg.595"/>
<dbReference type="eggNOG" id="COG0165">
    <property type="taxonomic scope" value="Bacteria"/>
</dbReference>
<dbReference type="HOGENOM" id="CLU_027272_2_3_6"/>
<dbReference type="OrthoDB" id="9769623at2"/>
<dbReference type="UniPathway" id="UPA00068">
    <property type="reaction ID" value="UER00114"/>
</dbReference>
<dbReference type="Proteomes" id="UP000000756">
    <property type="component" value="Chromosome"/>
</dbReference>
<dbReference type="GO" id="GO:0005829">
    <property type="term" value="C:cytosol"/>
    <property type="evidence" value="ECO:0007669"/>
    <property type="project" value="TreeGrafter"/>
</dbReference>
<dbReference type="GO" id="GO:0004056">
    <property type="term" value="F:argininosuccinate lyase activity"/>
    <property type="evidence" value="ECO:0007669"/>
    <property type="project" value="UniProtKB-UniRule"/>
</dbReference>
<dbReference type="GO" id="GO:0042450">
    <property type="term" value="P:arginine biosynthetic process via ornithine"/>
    <property type="evidence" value="ECO:0007669"/>
    <property type="project" value="InterPro"/>
</dbReference>
<dbReference type="GO" id="GO:0006526">
    <property type="term" value="P:L-arginine biosynthetic process"/>
    <property type="evidence" value="ECO:0007669"/>
    <property type="project" value="UniProtKB-UniRule"/>
</dbReference>
<dbReference type="CDD" id="cd01359">
    <property type="entry name" value="Argininosuccinate_lyase"/>
    <property type="match status" value="1"/>
</dbReference>
<dbReference type="FunFam" id="1.10.40.30:FF:000001">
    <property type="entry name" value="Argininosuccinate lyase"/>
    <property type="match status" value="1"/>
</dbReference>
<dbReference type="FunFam" id="1.20.200.10:FF:000006">
    <property type="entry name" value="Argininosuccinate lyase"/>
    <property type="match status" value="1"/>
</dbReference>
<dbReference type="Gene3D" id="1.10.40.30">
    <property type="entry name" value="Fumarase/aspartase (C-terminal domain)"/>
    <property type="match status" value="1"/>
</dbReference>
<dbReference type="Gene3D" id="1.20.200.10">
    <property type="entry name" value="Fumarase/aspartase (Central domain)"/>
    <property type="match status" value="1"/>
</dbReference>
<dbReference type="Gene3D" id="1.10.275.10">
    <property type="entry name" value="Fumarase/aspartase (N-terminal domain)"/>
    <property type="match status" value="1"/>
</dbReference>
<dbReference type="HAMAP" id="MF_00006">
    <property type="entry name" value="Arg_succ_lyase"/>
    <property type="match status" value="1"/>
</dbReference>
<dbReference type="InterPro" id="IPR029419">
    <property type="entry name" value="Arg_succ_lyase_C"/>
</dbReference>
<dbReference type="InterPro" id="IPR009049">
    <property type="entry name" value="Argininosuccinate_lyase"/>
</dbReference>
<dbReference type="InterPro" id="IPR024083">
    <property type="entry name" value="Fumarase/histidase_N"/>
</dbReference>
<dbReference type="InterPro" id="IPR020557">
    <property type="entry name" value="Fumarate_lyase_CS"/>
</dbReference>
<dbReference type="InterPro" id="IPR000362">
    <property type="entry name" value="Fumarate_lyase_fam"/>
</dbReference>
<dbReference type="InterPro" id="IPR022761">
    <property type="entry name" value="Fumarate_lyase_N"/>
</dbReference>
<dbReference type="InterPro" id="IPR008948">
    <property type="entry name" value="L-Aspartase-like"/>
</dbReference>
<dbReference type="NCBIfam" id="TIGR00838">
    <property type="entry name" value="argH"/>
    <property type="match status" value="1"/>
</dbReference>
<dbReference type="NCBIfam" id="NF008964">
    <property type="entry name" value="PRK12308.1"/>
    <property type="match status" value="1"/>
</dbReference>
<dbReference type="PANTHER" id="PTHR43814">
    <property type="entry name" value="ARGININOSUCCINATE LYASE"/>
    <property type="match status" value="1"/>
</dbReference>
<dbReference type="PANTHER" id="PTHR43814:SF1">
    <property type="entry name" value="ARGININOSUCCINATE LYASE"/>
    <property type="match status" value="1"/>
</dbReference>
<dbReference type="Pfam" id="PF14698">
    <property type="entry name" value="ASL_C2"/>
    <property type="match status" value="1"/>
</dbReference>
<dbReference type="Pfam" id="PF00206">
    <property type="entry name" value="Lyase_1"/>
    <property type="match status" value="1"/>
</dbReference>
<dbReference type="PRINTS" id="PR00145">
    <property type="entry name" value="ARGSUCLYASE"/>
</dbReference>
<dbReference type="PRINTS" id="PR00149">
    <property type="entry name" value="FUMRATELYASE"/>
</dbReference>
<dbReference type="SUPFAM" id="SSF48557">
    <property type="entry name" value="L-aspartase-like"/>
    <property type="match status" value="1"/>
</dbReference>
<dbReference type="PROSITE" id="PS00163">
    <property type="entry name" value="FUMARATE_LYASES"/>
    <property type="match status" value="1"/>
</dbReference>
<proteinExistence type="inferred from homology"/>
<sequence>MALWGGRFSQGADSRFKQFNDSLRFDYRLAEQDIQGSMAWAKALVKVGVLTADEQGKLQQAMEVLLASVQQDPQQILISDAEDIHSWVESALIAAVGDLGKKLHTGRSRNDQVATDLKLWCKAQGELLLGSITALQQGLVASARANQAAVLPGYTHLQRAQPVTYAHWALAYVEMLERDYSRLQDALKRLDTSPLGCGALAGTAYAIDREALALDMGFAGATRNSLDSVSDRDHVVELMHVASLSMTHLSRFAEDLIFYNTGEAGFVELSDAVTSGSSLMPQKKNPDALELIRGKTGRVVGAQMGMLMSLKALPLAYNKDMQEDKEGLFDALDTWHDCLDMAALVLIDLKVNGERTMAAAQGGYANATELADYLVAKGIPFREAHHIVGETVVYAIQVKKPLEELTIGEFQRFSPVIEFDVYPNLELEATLAKRVAKGGVAREQVEAALIAAETWLAKRAG</sequence>
<keyword id="KW-0028">Amino-acid biosynthesis</keyword>
<keyword id="KW-0055">Arginine biosynthesis</keyword>
<keyword id="KW-0963">Cytoplasm</keyword>
<keyword id="KW-0456">Lyase</keyword>
<keyword id="KW-1185">Reference proteome</keyword>
<protein>
    <recommendedName>
        <fullName evidence="1">Argininosuccinate lyase</fullName>
        <shortName evidence="1">ASAL</shortName>
        <ecNumber evidence="1">4.3.2.1</ecNumber>
    </recommendedName>
    <alternativeName>
        <fullName evidence="1">Arginosuccinase</fullName>
    </alternativeName>
</protein>
<accession>A0KFV4</accession>
<reference key="1">
    <citation type="journal article" date="2006" name="J. Bacteriol.">
        <title>Genome sequence of Aeromonas hydrophila ATCC 7966T: jack of all trades.</title>
        <authorList>
            <person name="Seshadri R."/>
            <person name="Joseph S.W."/>
            <person name="Chopra A.K."/>
            <person name="Sha J."/>
            <person name="Shaw J."/>
            <person name="Graf J."/>
            <person name="Haft D.H."/>
            <person name="Wu M."/>
            <person name="Ren Q."/>
            <person name="Rosovitz M.J."/>
            <person name="Madupu R."/>
            <person name="Tallon L."/>
            <person name="Kim M."/>
            <person name="Jin S."/>
            <person name="Vuong H."/>
            <person name="Stine O.C."/>
            <person name="Ali A."/>
            <person name="Horneman A.J."/>
            <person name="Heidelberg J.F."/>
        </authorList>
    </citation>
    <scope>NUCLEOTIDE SEQUENCE [LARGE SCALE GENOMIC DNA]</scope>
    <source>
        <strain>ATCC 7966 / DSM 30187 / BCRC 13018 / CCUG 14551 / JCM 1027 / KCTC 2358 / NCIMB 9240 / NCTC 8049</strain>
    </source>
</reference>
<organism>
    <name type="scientific">Aeromonas hydrophila subsp. hydrophila (strain ATCC 7966 / DSM 30187 / BCRC 13018 / CCUG 14551 / JCM 1027 / KCTC 2358 / NCIMB 9240 / NCTC 8049)</name>
    <dbReference type="NCBI Taxonomy" id="380703"/>
    <lineage>
        <taxon>Bacteria</taxon>
        <taxon>Pseudomonadati</taxon>
        <taxon>Pseudomonadota</taxon>
        <taxon>Gammaproteobacteria</taxon>
        <taxon>Aeromonadales</taxon>
        <taxon>Aeromonadaceae</taxon>
        <taxon>Aeromonas</taxon>
    </lineage>
</organism>